<reference key="1">
    <citation type="journal article" date="1995" name="Virology">
        <title>Aura virus is a New World representative of Sindbis-like viruses.</title>
        <authorList>
            <person name="Rumenapf T."/>
            <person name="Strauss E.G."/>
            <person name="Strauss J.H."/>
        </authorList>
    </citation>
    <scope>NUCLEOTIDE SEQUENCE [GENOMIC RNA]</scope>
</reference>
<reference key="2">
    <citation type="submission" date="2016-12" db="EMBL/GenBank/DDBJ databases">
        <authorList>
            <person name="Rumenapf T."/>
            <person name="Strauss E.G."/>
            <person name="Strauss J.H."/>
        </authorList>
    </citation>
    <scope>SEQUENCE REVISION TO 1883</scope>
</reference>
<proteinExistence type="inferred from homology"/>
<accession>Q86924</accession>
<organism>
    <name type="scientific">Aura virus</name>
    <name type="common">AURAV</name>
    <dbReference type="NCBI Taxonomy" id="44158"/>
    <lineage>
        <taxon>Viruses</taxon>
        <taxon>Riboviria</taxon>
        <taxon>Orthornavirae</taxon>
        <taxon>Kitrinoviricota</taxon>
        <taxon>Alsuviricetes</taxon>
        <taxon>Martellivirales</taxon>
        <taxon>Togaviridae</taxon>
        <taxon>Alphavirus</taxon>
    </lineage>
</organism>
<name>POLN_AURAV</name>
<protein>
    <recommendedName>
        <fullName>Polyprotein P1234</fullName>
        <shortName>P1234</shortName>
    </recommendedName>
    <alternativeName>
        <fullName>Non-structural polyprotein</fullName>
    </alternativeName>
    <component>
        <recommendedName>
            <fullName>Polyprotein P123'</fullName>
            <shortName>P123'</shortName>
        </recommendedName>
    </component>
    <component>
        <recommendedName>
            <fullName>Polyprotein P123</fullName>
            <shortName>P123</shortName>
        </recommendedName>
    </component>
    <component>
        <recommendedName>
            <fullName>mRNA-capping enzyme nsP1</fullName>
            <ecNumber evidence="4">2.1.1.-</ecNumber>
            <ecNumber evidence="2">2.7.7.-</ecNumber>
        </recommendedName>
        <alternativeName>
            <fullName>Non-structural protein 1</fullName>
        </alternativeName>
    </component>
    <component>
        <recommendedName>
            <fullName>Protease nsP2</fullName>
            <ecNumber evidence="6">3.4.22.-</ecNumber>
            <ecNumber evidence="6">3.6.1.15</ecNumber>
            <ecNumber evidence="3">3.6.1.74</ecNumber>
            <ecNumber evidence="6">3.6.4.13</ecNumber>
        </recommendedName>
        <alternativeName>
            <fullName>Non-structural protein 2</fullName>
            <shortName>nsP2</shortName>
        </alternativeName>
    </component>
    <component>
        <recommendedName>
            <fullName>Non-structural protein 3'</fullName>
            <shortName>nsP3'</shortName>
            <ecNumber evidence="12">3.1.3.84</ecNumber>
        </recommendedName>
    </component>
    <component>
        <recommendedName>
            <fullName>Non-structural protein 3</fullName>
            <shortName>nsP3</shortName>
            <ecNumber evidence="6">3.1.3.84</ecNumber>
        </recommendedName>
    </component>
    <component>
        <recommendedName>
            <fullName>RNA-directed RNA polymerase nsP4</fullName>
            <ecNumber evidence="2">2.7.7.19</ecNumber>
            <ecNumber evidence="8">2.7.7.48</ecNumber>
        </recommendedName>
        <alternativeName>
            <fullName>Non-structural protein 4</fullName>
            <shortName>nsP4</shortName>
        </alternativeName>
    </component>
</protein>
<sequence>MEKPTVHVDVDPQSPFVLQLQKSFPQFEIVAQQVTPNDHANARAFSHLASKLIEHEIPTSVTILDIGSAPARRMYSEHKYHCVCPMRSPEDPDRLMNYASRLADKAGEITNKRLHDKLADLKSVLESPDAETGTICFHNDVICRTTAEVSVMQNVYINAPSTIYHQALKGVRKLYWIGFDTTQFMFSSMAGSYPSYNTNWADERVLEARNIGLCSTKLREGTMGKLSTFRKKALKPGTNVYFSVGSTLYPENRADLQSWHLPSVFHLKGKQSFTCRCDTAVNCEGYVVKKITISPGITGRVNRYTVTNNSEGFLLCKITDTVKGERVSFPVCTYIPPSICDQMTGILATDIQPEDAQKLLVGLNQRIVVNGKTNRNTNTMQNYLLPAVATGLSKWAKERKADCSDEKPLNVRERKLAFGCLWAFKTKKIHSFYRPPGTQTIVKVAAEFSAFPMSSVWTTSLPMSLRQKVKLLLVKKTNKPVVTITDTAVKNAQEAYNEAVETAEAEEKAKALPPLKPTAPPVAEDVKCEVTDLVDDAGAALVETPRGKIKIIPQEGDVRIGSYTVISPAAVLRNQQLEPIHELAEQVKIITHGGRTGRYSVEPYDAKVLLPTGCPMSWQHFAALSESATLVYNEREFLNRKLHHIATKGAAKNTEEEQYKVCKAKDTDHEYVYDVDARKCVKREHAQGLVLVGELTNPPYHELAYEGLRTRPAAPYHIETLGVIGTPGSGKSAIIKSTVTLKDLVTSGKKENCKEIENDVQKMRGMTIATRTVDSVLLNGWKKAVDVLYVDEAFACHAGTLMALIAIVKPRRKVVLCGDPKQWPFFNLMQLKVNFNNPERDLCTSTHYKYISRRCTQPVTAIVSTLHYDGKMRTTNPCKRAIEIDVNGSTKPKKGDIVLTCFRGWVKQGQIDYPGPGGHDRAASQGLTRRGVYAVRQKVNENPLYAEKSEHVNVLLTRTEDRIVWKTLQGDPWIKYLTNVPKGNFTATLEEWQAEHEDIMKAINSTSTVSDPFASKVNTCWAKAIIPILRTAGIELTFEQWEDLFPQFRNDQPYSVMYALDVICTKMFGMDLSSGIFSRPEIPLTFHPADVGRVRAHWDNSPGGQKFGYNKAVIPTCKKYPVYLRAGKGDQILPIYGRVSVPSARNNLVPLNRNLPHSLTASLQKKEAAPLHKFLNQLPGHSMLLVSKETCYCVSKRITWVAPLGVRGADHNHDLHFGFPPLSRYDLVVVNMGQPYRFHHYQQCEEHAGLMRTLARSALNCLKPGGTLALKAYGFADSNSEDVVLSLARKFVRASAVRPSCTQFNTEMFFVFRQLDNDRERQFTQHHLNLAVSNIFDNYKDGSGAAPSYRVKRMNIADCTEEAVVNAANARGKPGDGVCRAIFKKWPKSFENATTEVETAVMKPCHNKVVIHAVGPDFRKYTLEEATKLLQNAYHDVAKIVNEKGISSVAIPLLSTGIYAAGADRLDLSLRCLFTALDRTDADVTIYCLDKKWEQRIADAIRMREQVTELKDPDIEIDEGLTRVHPDSCLKDHIGYSTQYGKLYSYFEGTKFHQTAKDIAEIRALFPDVQAANEQICLYTLGEPMESIREKCPVEDSPASAPPKTIPCLCMYAMTAERICRVRSNSVTNITVCSSFPLPKYRIKNVQKIQCTKVVLFNPDVPPYIPARVYINKDEPPVTPHTDSPPDTCSSRLSLTPTLSNAESDIVSLTFSEIDSELSSLNEPARHVMISSFKLRYTAIQALPQKLSWMREDRTPRQPPPVPPPRPKRAAKLSRLANQLNELRRHATISSVQAEVHYNSGFTPEAELNERGSILRKPPPVPPLRPKQTTNLSRLANQLSMPITFGDFAEGELDRLLTPSPTPTFGDFSQEEMDRFFGNRQYXLTGVGGYIFSSDTGPGHLQQKSVIQNSTTEILIERSRLEKIHAPVLDLQKEEMLKCRYQMSPTVANKSRYQSRKVENMKAVTTGRLLDGLKMYVTPDVEAECYKYTYPKPMYSASVPDRFVSPEVAVAVCNNFFHENYPTVASYQITDEYDAYLDMVEGSVSCLDTATFCPAKLRSFPKTHSYLEPTLRSAVPSAFQNTLQNVLSAATKRNCNVTQMRELPVLDSAVFNVECFKKYACNTDYWEEFKEKPIRITTECVTSYVARLKGPEAAALFAKTHQLVPLQEVPMDRFVMDMKRDVKVTPGTKHTEERPKVQVIQAAEPLATAYLCGIHRELVRRLTAVLLPNIHTLFDMSAEDFDAIIAANFSYVHPVLETDIGSFDKSQDDSLALTALMILEDLGVDDRLMDLIECAFGEITSVHLPTATTFKFGAMMKSGMFLTLFVNTVLNVVIASRVLEQRLRDSKCAAFIGDDNIIHGVVSDKIMADRCATWMNMEVKIIDAVIGIKAPYFCGGFILEDQVTHTACRVSDPLKRLFKLGKPLPVDDEQDHDRRRALEDETRAWFRVGIQGELLKAVESRYEVQEVQPVLLALATFSRSDKAFKALRGSPRHLYGGPK</sequence>
<feature type="chain" id="PRO_0000308382" description="Polyprotein P1234">
    <location>
        <begin position="1"/>
        <end position="2499"/>
    </location>
</feature>
<feature type="chain" id="PRO_0000238699" description="Polyprotein P123'">
    <location>
        <begin position="1"/>
        <end position="1889"/>
    </location>
</feature>
<feature type="chain" id="PRO_0000238700" description="Polyprotein P123">
    <location>
        <begin position="1"/>
        <end position="1882"/>
    </location>
</feature>
<feature type="chain" id="PRO_0000238701" description="mRNA-capping enzyme nsP1">
    <location>
        <begin position="1"/>
        <end position="539"/>
    </location>
</feature>
<feature type="chain" id="PRO_0000238702" description="Protease nsP2">
    <location>
        <begin position="540"/>
        <end position="1345"/>
    </location>
</feature>
<feature type="chain" id="PRO_0000238703" description="Non-structural protein 3'">
    <location>
        <begin position="1346"/>
        <end position="1889"/>
    </location>
</feature>
<feature type="chain" id="PRO_0000238704" description="Non-structural protein 3">
    <location>
        <begin position="1346"/>
        <end position="1882"/>
    </location>
</feature>
<feature type="chain" id="PRO_0000238705" description="RNA-directed RNA polymerase nsP4">
    <location>
        <begin position="1890"/>
        <end position="2499"/>
    </location>
</feature>
<feature type="domain" description="Alphavirus-like MT" evidence="11">
    <location>
        <begin position="30"/>
        <end position="260"/>
    </location>
</feature>
<feature type="domain" description="(+)RNA virus helicase ATP-binding" evidence="10">
    <location>
        <begin position="694"/>
        <end position="849"/>
    </location>
</feature>
<feature type="domain" description="(+)RNA virus helicase C-terminal" evidence="10">
    <location>
        <begin position="850"/>
        <end position="998"/>
    </location>
</feature>
<feature type="domain" description="Peptidase C9" evidence="9">
    <location>
        <begin position="1011"/>
        <end position="1339"/>
    </location>
</feature>
<feature type="domain" description="Macro" evidence="7">
    <location>
        <begin position="1346"/>
        <end position="1505"/>
    </location>
</feature>
<feature type="domain" description="RdRp catalytic" evidence="8">
    <location>
        <begin position="2253"/>
        <end position="2368"/>
    </location>
</feature>
<feature type="region of interest" description="NsP1 membrane-binding" evidence="3">
    <location>
        <begin position="245"/>
        <end position="264"/>
    </location>
</feature>
<feature type="region of interest" description="Nucleolus localization signal" evidence="3">
    <location>
        <begin position="1012"/>
        <end position="1031"/>
    </location>
</feature>
<feature type="short sequence motif" description="Nuclear export signal" evidence="4">
    <location>
        <begin position="1065"/>
        <end position="1074"/>
    </location>
</feature>
<feature type="short sequence motif" description="Nuclear localization signal" evidence="3">
    <location>
        <begin position="1194"/>
        <end position="1198"/>
    </location>
</feature>
<feature type="short sequence motif" description="FGDF; binding to host G3BP1" evidence="3">
    <location>
        <begin position="1845"/>
        <end position="1848"/>
    </location>
</feature>
<feature type="short sequence motif" description="FGDF; binding to host G3BP1" evidence="3">
    <location>
        <begin position="1865"/>
        <end position="1868"/>
    </location>
</feature>
<feature type="active site" description="For cysteine protease nsP2 activity" evidence="9">
    <location>
        <position position="1020"/>
    </location>
</feature>
<feature type="active site" description="For cysteine protease nsP2 activity" evidence="9">
    <location>
        <position position="1097"/>
    </location>
</feature>
<feature type="binding site" evidence="10">
    <location>
        <begin position="725"/>
        <end position="732"/>
    </location>
    <ligand>
        <name>a ribonucleoside 5'-triphosphate</name>
        <dbReference type="ChEBI" id="CHEBI:61557"/>
    </ligand>
</feature>
<feature type="binding site" evidence="6">
    <location>
        <position position="1369"/>
    </location>
    <ligand>
        <name>ADP-D-ribose</name>
        <dbReference type="ChEBI" id="CHEBI:57967"/>
    </ligand>
</feature>
<feature type="binding site" evidence="6">
    <location>
        <position position="1377"/>
    </location>
    <ligand>
        <name>ADP-D-ribose</name>
        <dbReference type="ChEBI" id="CHEBI:57967"/>
    </ligand>
</feature>
<feature type="binding site" evidence="5">
    <location>
        <position position="1457"/>
    </location>
    <ligand>
        <name>ADP-D-ribose</name>
        <dbReference type="ChEBI" id="CHEBI:57967"/>
    </ligand>
</feature>
<feature type="binding site" evidence="5">
    <location>
        <position position="1458"/>
    </location>
    <ligand>
        <name>ADP-D-ribose</name>
        <dbReference type="ChEBI" id="CHEBI:57967"/>
    </ligand>
</feature>
<feature type="binding site" evidence="6">
    <location>
        <position position="1459"/>
    </location>
    <ligand>
        <name>ADP-D-ribose</name>
        <dbReference type="ChEBI" id="CHEBI:57967"/>
    </ligand>
</feature>
<feature type="binding site" evidence="2">
    <location>
        <position position="1608"/>
    </location>
    <ligand>
        <name>Zn(2+)</name>
        <dbReference type="ChEBI" id="CHEBI:29105"/>
    </ligand>
</feature>
<feature type="binding site" evidence="2">
    <location>
        <position position="1610"/>
    </location>
    <ligand>
        <name>Zn(2+)</name>
        <dbReference type="ChEBI" id="CHEBI:29105"/>
    </ligand>
</feature>
<feature type="binding site" evidence="2">
    <location>
        <position position="1633"/>
    </location>
    <ligand>
        <name>Zn(2+)</name>
        <dbReference type="ChEBI" id="CHEBI:29105"/>
    </ligand>
</feature>
<feature type="binding site" evidence="2">
    <location>
        <position position="1651"/>
    </location>
    <ligand>
        <name>Zn(2+)</name>
        <dbReference type="ChEBI" id="CHEBI:29105"/>
    </ligand>
</feature>
<feature type="site" description="Involved in the phosphoramide link with 7-methyl-GMP" evidence="4">
    <location>
        <position position="39"/>
    </location>
</feature>
<feature type="site" description="Cleavage; by protease nsP2" evidence="2">
    <location>
        <begin position="539"/>
        <end position="540"/>
    </location>
</feature>
<feature type="site" description="Cleavage; by protease nsP2" evidence="2">
    <location>
        <begin position="1345"/>
        <end position="1346"/>
    </location>
</feature>
<feature type="site" description="Cleavage; by protease nsP2" evidence="6">
    <location>
        <begin position="1889"/>
        <end position="1890"/>
    </location>
</feature>
<feature type="lipid moiety-binding region" description="S-palmitoyl cysteine; by host" evidence="6">
    <location>
        <position position="420"/>
    </location>
</feature>
<keyword id="KW-0067">ATP-binding</keyword>
<keyword id="KW-1262">Eukaryotic host gene expression shutoff by virus</keyword>
<keyword id="KW-1191">Eukaryotic host transcription shutoff by virus</keyword>
<keyword id="KW-0342">GTP-binding</keyword>
<keyword id="KW-0347">Helicase</keyword>
<keyword id="KW-1032">Host cell membrane</keyword>
<keyword id="KW-1034">Host cell projection</keyword>
<keyword id="KW-1035">Host cytoplasm</keyword>
<keyword id="KW-1036">Host cytoplasmic vesicle</keyword>
<keyword id="KW-1190">Host gene expression shutoff by virus</keyword>
<keyword id="KW-1043">Host membrane</keyword>
<keyword id="KW-1048">Host nucleus</keyword>
<keyword id="KW-0945">Host-virus interaction</keyword>
<keyword id="KW-0378">Hydrolase</keyword>
<keyword id="KW-1104">Inhibition of host RNA polymerase II by virus</keyword>
<keyword id="KW-0449">Lipoprotein</keyword>
<keyword id="KW-0472">Membrane</keyword>
<keyword id="KW-0479">Metal-binding</keyword>
<keyword id="KW-0489">Methyltransferase</keyword>
<keyword id="KW-0506">mRNA capping</keyword>
<keyword id="KW-0507">mRNA processing</keyword>
<keyword id="KW-0511">Multifunctional enzyme</keyword>
<keyword id="KW-0547">Nucleotide-binding</keyword>
<keyword id="KW-0548">Nucleotidyltransferase</keyword>
<keyword id="KW-0564">Palmitate</keyword>
<keyword id="KW-0597">Phosphoprotein</keyword>
<keyword id="KW-0645">Protease</keyword>
<keyword id="KW-1159">RNA suppression of termination</keyword>
<keyword id="KW-0694">RNA-binding</keyword>
<keyword id="KW-0696">RNA-directed RNA polymerase</keyword>
<keyword id="KW-0949">S-adenosyl-L-methionine</keyword>
<keyword id="KW-0788">Thiol protease</keyword>
<keyword id="KW-0808">Transferase</keyword>
<keyword id="KW-0832">Ubl conjugation</keyword>
<keyword id="KW-0693">Viral RNA replication</keyword>
<keyword id="KW-0862">Zinc</keyword>
<dbReference type="EC" id="2.1.1.-" evidence="4"/>
<dbReference type="EC" id="2.7.7.-" evidence="2"/>
<dbReference type="EC" id="3.4.22.-" evidence="6"/>
<dbReference type="EC" id="3.6.1.15" evidence="6"/>
<dbReference type="EC" id="3.6.1.74" evidence="3"/>
<dbReference type="EC" id="3.6.4.13" evidence="6"/>
<dbReference type="EC" id="3.1.3.84" evidence="12 6"/>
<dbReference type="EC" id="2.7.7.19" evidence="2"/>
<dbReference type="EC" id="2.7.7.48" evidence="8"/>
<dbReference type="EMBL" id="AF126284">
    <property type="protein sequence ID" value="AAD13622.2"/>
    <property type="molecule type" value="Genomic_RNA"/>
</dbReference>
<dbReference type="RefSeq" id="NP_632023.2">
    <property type="nucleotide sequence ID" value="NC_003900.1"/>
</dbReference>
<dbReference type="MEROPS" id="C09.001"/>
<dbReference type="GeneID" id="944525"/>
<dbReference type="KEGG" id="vg:944525"/>
<dbReference type="Proteomes" id="UP000007442">
    <property type="component" value="Genome"/>
</dbReference>
<dbReference type="GO" id="GO:0044162">
    <property type="term" value="C:host cell cytoplasmic vesicle membrane"/>
    <property type="evidence" value="ECO:0007669"/>
    <property type="project" value="UniProtKB-SubCell"/>
</dbReference>
<dbReference type="GO" id="GO:0044176">
    <property type="term" value="C:host cell filopodium"/>
    <property type="evidence" value="ECO:0007669"/>
    <property type="project" value="UniProtKB-SubCell"/>
</dbReference>
<dbReference type="GO" id="GO:0042025">
    <property type="term" value="C:host cell nucleus"/>
    <property type="evidence" value="ECO:0007669"/>
    <property type="project" value="UniProtKB-SubCell"/>
</dbReference>
<dbReference type="GO" id="GO:0020002">
    <property type="term" value="C:host cell plasma membrane"/>
    <property type="evidence" value="ECO:0007669"/>
    <property type="project" value="UniProtKB-SubCell"/>
</dbReference>
<dbReference type="GO" id="GO:0016020">
    <property type="term" value="C:membrane"/>
    <property type="evidence" value="ECO:0007669"/>
    <property type="project" value="UniProtKB-KW"/>
</dbReference>
<dbReference type="GO" id="GO:0005524">
    <property type="term" value="F:ATP binding"/>
    <property type="evidence" value="ECO:0007669"/>
    <property type="project" value="UniProtKB-KW"/>
</dbReference>
<dbReference type="GO" id="GO:0016887">
    <property type="term" value="F:ATP hydrolysis activity"/>
    <property type="evidence" value="ECO:0007669"/>
    <property type="project" value="RHEA"/>
</dbReference>
<dbReference type="GO" id="GO:0008234">
    <property type="term" value="F:cysteine-type peptidase activity"/>
    <property type="evidence" value="ECO:0007669"/>
    <property type="project" value="UniProtKB-KW"/>
</dbReference>
<dbReference type="GO" id="GO:0005525">
    <property type="term" value="F:GTP binding"/>
    <property type="evidence" value="ECO:0007669"/>
    <property type="project" value="UniProtKB-KW"/>
</dbReference>
<dbReference type="GO" id="GO:0046872">
    <property type="term" value="F:metal ion binding"/>
    <property type="evidence" value="ECO:0007669"/>
    <property type="project" value="UniProtKB-KW"/>
</dbReference>
<dbReference type="GO" id="GO:0140818">
    <property type="term" value="F:mRNA 5'-triphosphate monophosphatase activity"/>
    <property type="evidence" value="ECO:0007669"/>
    <property type="project" value="RHEA"/>
</dbReference>
<dbReference type="GO" id="GO:0008174">
    <property type="term" value="F:mRNA methyltransferase activity"/>
    <property type="evidence" value="ECO:0007669"/>
    <property type="project" value="InterPro"/>
</dbReference>
<dbReference type="GO" id="GO:1990817">
    <property type="term" value="F:poly(A) RNA polymerase activity"/>
    <property type="evidence" value="ECO:0007669"/>
    <property type="project" value="UniProtKB-EC"/>
</dbReference>
<dbReference type="GO" id="GO:0004651">
    <property type="term" value="F:polynucleotide 5'-phosphatase activity"/>
    <property type="evidence" value="ECO:0007669"/>
    <property type="project" value="UniProtKB-EC"/>
</dbReference>
<dbReference type="GO" id="GO:0003723">
    <property type="term" value="F:RNA binding"/>
    <property type="evidence" value="ECO:0007669"/>
    <property type="project" value="UniProtKB-KW"/>
</dbReference>
<dbReference type="GO" id="GO:0003724">
    <property type="term" value="F:RNA helicase activity"/>
    <property type="evidence" value="ECO:0007669"/>
    <property type="project" value="UniProtKB-EC"/>
</dbReference>
<dbReference type="GO" id="GO:0003968">
    <property type="term" value="F:RNA-directed RNA polymerase activity"/>
    <property type="evidence" value="ECO:0007669"/>
    <property type="project" value="UniProtKB-KW"/>
</dbReference>
<dbReference type="GO" id="GO:0006370">
    <property type="term" value="P:7-methylguanosine mRNA capping"/>
    <property type="evidence" value="ECO:0007669"/>
    <property type="project" value="UniProtKB-KW"/>
</dbReference>
<dbReference type="GO" id="GO:0006351">
    <property type="term" value="P:DNA-templated transcription"/>
    <property type="evidence" value="ECO:0007669"/>
    <property type="project" value="InterPro"/>
</dbReference>
<dbReference type="GO" id="GO:0032259">
    <property type="term" value="P:methylation"/>
    <property type="evidence" value="ECO:0007669"/>
    <property type="project" value="UniProtKB-KW"/>
</dbReference>
<dbReference type="GO" id="GO:0016556">
    <property type="term" value="P:mRNA modification"/>
    <property type="evidence" value="ECO:0007669"/>
    <property type="project" value="InterPro"/>
</dbReference>
<dbReference type="GO" id="GO:0006508">
    <property type="term" value="P:proteolysis"/>
    <property type="evidence" value="ECO:0007669"/>
    <property type="project" value="UniProtKB-KW"/>
</dbReference>
<dbReference type="GO" id="GO:0039657">
    <property type="term" value="P:symbiont-mediated suppression of host gene expression"/>
    <property type="evidence" value="ECO:0007669"/>
    <property type="project" value="UniProtKB-KW"/>
</dbReference>
<dbReference type="GO" id="GO:0039523">
    <property type="term" value="P:symbiont-mediated suppression of host mRNA transcription via inhibition of RNA polymerase II activity"/>
    <property type="evidence" value="ECO:0007669"/>
    <property type="project" value="UniProtKB-KW"/>
</dbReference>
<dbReference type="GO" id="GO:0039694">
    <property type="term" value="P:viral RNA genome replication"/>
    <property type="evidence" value="ECO:0007669"/>
    <property type="project" value="InterPro"/>
</dbReference>
<dbReference type="CDD" id="cd21557">
    <property type="entry name" value="Macro_X_Nsp3-like"/>
    <property type="match status" value="1"/>
</dbReference>
<dbReference type="CDD" id="cd23250">
    <property type="entry name" value="Togaviridae_RdRp"/>
    <property type="match status" value="1"/>
</dbReference>
<dbReference type="FunFam" id="3.40.220.10:FF:000015">
    <property type="entry name" value="Polyprotein P1234"/>
    <property type="match status" value="1"/>
</dbReference>
<dbReference type="FunFam" id="3.40.50.300:FF:001415">
    <property type="entry name" value="Polyprotein P1234"/>
    <property type="match status" value="1"/>
</dbReference>
<dbReference type="Gene3D" id="3.90.70.110">
    <property type="entry name" value="Alphavirus nsP2 protease domain"/>
    <property type="match status" value="1"/>
</dbReference>
<dbReference type="Gene3D" id="3.40.220.10">
    <property type="entry name" value="Leucine Aminopeptidase, subunit E, domain 1"/>
    <property type="match status" value="1"/>
</dbReference>
<dbReference type="Gene3D" id="3.40.50.300">
    <property type="entry name" value="P-loop containing nucleotide triphosphate hydrolases"/>
    <property type="match status" value="2"/>
</dbReference>
<dbReference type="Gene3D" id="3.40.50.150">
    <property type="entry name" value="Vaccinia Virus protein VP39"/>
    <property type="match status" value="1"/>
</dbReference>
<dbReference type="InterPro" id="IPR027351">
    <property type="entry name" value="(+)RNA_virus_helicase_core_dom"/>
</dbReference>
<dbReference type="InterPro" id="IPR002588">
    <property type="entry name" value="Alphavirus-like_MT_dom"/>
</dbReference>
<dbReference type="InterPro" id="IPR002620">
    <property type="entry name" value="Alphavirus_nsp2pro"/>
</dbReference>
<dbReference type="InterPro" id="IPR044936">
    <property type="entry name" value="Alphavirus_nsp2pro_sf"/>
</dbReference>
<dbReference type="InterPro" id="IPR043502">
    <property type="entry name" value="DNA/RNA_pol_sf"/>
</dbReference>
<dbReference type="InterPro" id="IPR002589">
    <property type="entry name" value="Macro_dom"/>
</dbReference>
<dbReference type="InterPro" id="IPR043472">
    <property type="entry name" value="Macro_dom-like"/>
</dbReference>
<dbReference type="InterPro" id="IPR044371">
    <property type="entry name" value="Macro_X_NSP3-like"/>
</dbReference>
<dbReference type="InterPro" id="IPR048891">
    <property type="entry name" value="nsP3_ZBD"/>
</dbReference>
<dbReference type="InterPro" id="IPR027417">
    <property type="entry name" value="P-loop_NTPase"/>
</dbReference>
<dbReference type="InterPro" id="IPR001788">
    <property type="entry name" value="RNA-dep_RNA_pol_alsuvir"/>
</dbReference>
<dbReference type="InterPro" id="IPR007094">
    <property type="entry name" value="RNA-dir_pol_PSvirus"/>
</dbReference>
<dbReference type="InterPro" id="IPR029063">
    <property type="entry name" value="SAM-dependent_MTases_sf"/>
</dbReference>
<dbReference type="InterPro" id="IPR047311">
    <property type="entry name" value="Togaviridae_RdRp"/>
</dbReference>
<dbReference type="InterPro" id="IPR049329">
    <property type="entry name" value="ToMV_Hel_N"/>
</dbReference>
<dbReference type="PANTHER" id="PTHR11106">
    <property type="entry name" value="GANGLIOSIDE INDUCED DIFFERENTIATION ASSOCIATED PROTEIN 2-RELATED"/>
    <property type="match status" value="1"/>
</dbReference>
<dbReference type="PANTHER" id="PTHR11106:SF111">
    <property type="entry name" value="MACRO DOMAIN-CONTAINING PROTEIN"/>
    <property type="match status" value="1"/>
</dbReference>
<dbReference type="Pfam" id="PF01661">
    <property type="entry name" value="Macro"/>
    <property type="match status" value="1"/>
</dbReference>
<dbReference type="Pfam" id="PF20852">
    <property type="entry name" value="nsP3_ZBD"/>
    <property type="match status" value="1"/>
</dbReference>
<dbReference type="Pfam" id="PF01707">
    <property type="entry name" value="Peptidase_C9"/>
    <property type="match status" value="1"/>
</dbReference>
<dbReference type="Pfam" id="PF00978">
    <property type="entry name" value="RdRP_2"/>
    <property type="match status" value="1"/>
</dbReference>
<dbReference type="Pfam" id="PF20896">
    <property type="entry name" value="ToMV_Hel_N"/>
    <property type="match status" value="1"/>
</dbReference>
<dbReference type="Pfam" id="PF01443">
    <property type="entry name" value="Viral_helicase1"/>
    <property type="match status" value="1"/>
</dbReference>
<dbReference type="Pfam" id="PF01660">
    <property type="entry name" value="Vmethyltransf"/>
    <property type="match status" value="1"/>
</dbReference>
<dbReference type="SMART" id="SM00506">
    <property type="entry name" value="A1pp"/>
    <property type="match status" value="1"/>
</dbReference>
<dbReference type="SUPFAM" id="SSF56672">
    <property type="entry name" value="DNA/RNA polymerases"/>
    <property type="match status" value="1"/>
</dbReference>
<dbReference type="SUPFAM" id="SSF52949">
    <property type="entry name" value="Macro domain-like"/>
    <property type="match status" value="1"/>
</dbReference>
<dbReference type="SUPFAM" id="SSF52540">
    <property type="entry name" value="P-loop containing nucleoside triphosphate hydrolases"/>
    <property type="match status" value="1"/>
</dbReference>
<dbReference type="SUPFAM" id="SSF53335">
    <property type="entry name" value="S-adenosyl-L-methionine-dependent methyltransferases"/>
    <property type="match status" value="1"/>
</dbReference>
<dbReference type="PROSITE" id="PS51743">
    <property type="entry name" value="ALPHAVIRUS_MT"/>
    <property type="match status" value="1"/>
</dbReference>
<dbReference type="PROSITE" id="PS51154">
    <property type="entry name" value="MACRO"/>
    <property type="match status" value="1"/>
</dbReference>
<dbReference type="PROSITE" id="PS51520">
    <property type="entry name" value="NSP2PRO"/>
    <property type="match status" value="1"/>
</dbReference>
<dbReference type="PROSITE" id="PS51657">
    <property type="entry name" value="PSRV_HELICASE"/>
    <property type="match status" value="1"/>
</dbReference>
<dbReference type="PROSITE" id="PS50507">
    <property type="entry name" value="RDRP_SSRNA_POS"/>
    <property type="match status" value="1"/>
</dbReference>
<comment type="function">
    <molecule>Polyprotein P1234</molecule>
    <text evidence="6">Inactive precursor of the viral replicase, which is activated by cleavages carried out by the viral protease nsP2.</text>
</comment>
<comment type="function">
    <molecule>Polyprotein P123</molecule>
    <text evidence="2">The early replication complex formed by the polyprotein P123 and nsP4 synthesizes minus-strand RNAs (By similarity). As soon P123 is cleaved into mature proteins, the plus-strand RNAs synthesis begins (By similarity).</text>
</comment>
<comment type="function">
    <molecule>Polyprotein P123'</molecule>
    <text evidence="12">The early replication complex formed by the polyprotein P123' and nsP4 synthesizes minus-strand RNAs (Probable). Polyprotein P123' is a short-lived polyprotein that accumulates during early stage of infection (Probable). As soon P123' is cleaved into mature proteins, the plus-strand RNAs synthesis begins (Probable).</text>
</comment>
<comment type="function">
    <molecule>mRNA-capping enzyme nsP1</molecule>
    <text evidence="2 3 6 12">Cytoplasmic capping enzyme that catalyzes two virus-specific reactions: methyltransferase and nsP1 guanylyltransferase (By similarity). mRNA-capping is necessary since all viral RNAs are synthesized in the cytoplasm, and host capping enzymes are restricted to the nucleus (Probable). The enzymatic reaction involves a covalent link between 7-methyl-GMP and nsP1, whereas eukaryotic capping enzymes form a covalent complex only with GMP (By similarity). nsP1 capping consists in the following reactions: GTP is first methylated into 7-methyl-GMP and then is covalently linked to nsP1 to form the m7GMp-nsP1 complex from which 7-methyl-GMP complex is transferred to the mRNA to create the cap structure (By similarity). NsP1 is needed for the initiation of the minus-strand RNAs synthesis (By similarity). Probably serves as a membrane anchor for the replication complex composed of nsP1-nsP4 (By similarity). Palmitoylated nsP1 is remodeling host cell cytoskeleton, and induces filopodium-like structure formation at the surface of the host cell (By similarity).</text>
</comment>
<comment type="function">
    <molecule>Protease nsP2</molecule>
    <text evidence="2 3 6">Multifunctional protein whose N-terminus is part of the RNA polymerase complex and displays NTPase, RNA triphosphatase and helicase activities (By similarity). NTPase and RNA triphosphatase are involved in viral RNA capping and helicase keeps a check on the dsRNA replication intermediates (By similarity). The C-terminus harbors a protease that specifically cleaves the polyproteins and releases the mature proteins (By similarity). Required for the shutoff of minus-strand RNAs synthesis (By similarity). Specifically inhibits the host IFN response by promoting the nuclear export of host STAT1 (By similarity). Also inhibits host transcription by inducing rapid proteasome-dependent degradation of POLR2A, a catalytic subunit of the RNAPII complex (By similarity). The resulting inhibition of cellular protein synthesis serves to ensure maximal viral gene expression and to evade host immune response (By similarity).</text>
</comment>
<comment type="function">
    <molecule>Non-structural protein 3'</molecule>
    <text evidence="2 12">Seems to be essential for minus-strand RNAs and subgenomic 26S mRNAs synthesis (By similarity). Displays mono-ADP-ribosylhydrolase activity (Probable). ADP-ribosylation is a post-translational modification that controls various processes of the host cell and the virus probably needs to revert it for optimal viral replication (Probable). Binds proteins of FXR family and sequesters them into the viral RNA replication complexes thereby inhibiting the formation of host stress granules on viral mRNAs (Probable). The nsp3'-FXR complexes bind viral RNAs and probably orchestrate the assembly of viral replication complexes, thanks to the ability of FXR family members to self-assemble and bind DNA (Probable).</text>
</comment>
<comment type="function">
    <molecule>Non-structural protein 3</molecule>
    <text evidence="2 6">Seems to be essential for minus-strand RNAs and subgenomic 26S mRNAs synthesis (By similarity). Displays mono-ADP-ribosylhydrolase activity (By similarity). ADP-ribosylation is a post-translantional modification that controls various processes of the host cell and the virus probably needs to revert it for optimal viral replication (By similarity). Binds proteins of G3BP family and sequesters them into the viral RNA replication complexes thereby inhibiting the formation of host stress granules on viral mRNAs (By similarity). The nsp3-G3BP complexes bind viral RNAs and probably orchestrate the assembly of viral replication complexes, thanks to the ability of G3BP family members to self-assemble and bind DNA (By similarity).</text>
</comment>
<comment type="function">
    <molecule>RNA-directed RNA polymerase nsP4</molecule>
    <text evidence="2">RNA dependent RNA polymerase (By similarity). Replicates genomic and antigenomic RNA by recognizing replications specific signals. The early replication complex formed by the polyprotein P123 and nsP4 synthesizes minus-strand RNAs (By similarity). The late replication complex composed of fully processed nsP1-nsP4 is responsible for the production of genomic and subgenomic plus-strand RNAs (By similarity). The core catalytic domain of nsP4 also possesses terminal adenylyltransferase (TATase) activity that is probably involved in maintenance and repair of the poly(A) tail, an element required for replication of the viral genome (By similarity).</text>
</comment>
<comment type="catalytic activity">
    <reaction evidence="4">
        <text>GTP + S-adenosyl-L-methionine = N(7)-methyl-GTP + S-adenosyl-L-homocysteine</text>
        <dbReference type="Rhea" id="RHEA:46948"/>
        <dbReference type="ChEBI" id="CHEBI:37565"/>
        <dbReference type="ChEBI" id="CHEBI:57856"/>
        <dbReference type="ChEBI" id="CHEBI:59789"/>
        <dbReference type="ChEBI" id="CHEBI:87133"/>
    </reaction>
</comment>
<comment type="catalytic activity">
    <reaction evidence="2">
        <text>N(7)-methyl-GTP + L-histidyl-[protein] = N(tele)-(N(7)-methylguanosine 5'-phospho)-L-histidyl-[protein] + diphosphate</text>
        <dbReference type="Rhea" id="RHEA:54792"/>
        <dbReference type="Rhea" id="RHEA-COMP:9745"/>
        <dbReference type="Rhea" id="RHEA-COMP:13995"/>
        <dbReference type="ChEBI" id="CHEBI:29979"/>
        <dbReference type="ChEBI" id="CHEBI:33019"/>
        <dbReference type="ChEBI" id="CHEBI:87133"/>
        <dbReference type="ChEBI" id="CHEBI:138334"/>
    </reaction>
    <physiologicalReaction direction="left-to-right" evidence="2">
        <dbReference type="Rhea" id="RHEA:54793"/>
    </physiologicalReaction>
</comment>
<comment type="catalytic activity">
    <reaction evidence="4">
        <text>N(tele)-(N(7)-methylguanosine 5'-phospho)-L-histidyl-[protein] + a 5'-end diphospho-(purine-ribonucleoside) in mRNA + H(+) = a 5'-end (N(7)-methyl 5'-triphosphoguanosine)-(purine-ribonucleoside) in mRNA + L-histidyl-[protein]</text>
        <dbReference type="Rhea" id="RHEA:54800"/>
        <dbReference type="Rhea" id="RHEA-COMP:9745"/>
        <dbReference type="Rhea" id="RHEA-COMP:12925"/>
        <dbReference type="Rhea" id="RHEA-COMP:13929"/>
        <dbReference type="Rhea" id="RHEA-COMP:13995"/>
        <dbReference type="ChEBI" id="CHEBI:15378"/>
        <dbReference type="ChEBI" id="CHEBI:29979"/>
        <dbReference type="ChEBI" id="CHEBI:133968"/>
        <dbReference type="ChEBI" id="CHEBI:138276"/>
        <dbReference type="ChEBI" id="CHEBI:138334"/>
    </reaction>
</comment>
<comment type="catalytic activity">
    <reaction evidence="3">
        <text>a 5'-end triphospho-ribonucleoside in mRNA + H2O = a 5'-end diphospho-ribonucleoside in mRNA + phosphate + H(+)</text>
        <dbReference type="Rhea" id="RHEA:67004"/>
        <dbReference type="Rhea" id="RHEA-COMP:17164"/>
        <dbReference type="Rhea" id="RHEA-COMP:17165"/>
        <dbReference type="ChEBI" id="CHEBI:15377"/>
        <dbReference type="ChEBI" id="CHEBI:15378"/>
        <dbReference type="ChEBI" id="CHEBI:43474"/>
        <dbReference type="ChEBI" id="CHEBI:167616"/>
        <dbReference type="ChEBI" id="CHEBI:167618"/>
        <dbReference type="EC" id="3.6.1.74"/>
    </reaction>
    <physiologicalReaction direction="left-to-right" evidence="3">
        <dbReference type="Rhea" id="RHEA:67005"/>
    </physiologicalReaction>
</comment>
<comment type="catalytic activity">
    <reaction evidence="6">
        <text>a ribonucleoside 5'-triphosphate + H2O = a ribonucleoside 5'-diphosphate + phosphate + H(+)</text>
        <dbReference type="Rhea" id="RHEA:23680"/>
        <dbReference type="ChEBI" id="CHEBI:15377"/>
        <dbReference type="ChEBI" id="CHEBI:15378"/>
        <dbReference type="ChEBI" id="CHEBI:43474"/>
        <dbReference type="ChEBI" id="CHEBI:57930"/>
        <dbReference type="ChEBI" id="CHEBI:61557"/>
        <dbReference type="EC" id="3.6.1.15"/>
    </reaction>
</comment>
<comment type="catalytic activity">
    <reaction evidence="6">
        <text>ATP + H2O = ADP + phosphate + H(+)</text>
        <dbReference type="Rhea" id="RHEA:13065"/>
        <dbReference type="ChEBI" id="CHEBI:15377"/>
        <dbReference type="ChEBI" id="CHEBI:15378"/>
        <dbReference type="ChEBI" id="CHEBI:30616"/>
        <dbReference type="ChEBI" id="CHEBI:43474"/>
        <dbReference type="ChEBI" id="CHEBI:456216"/>
        <dbReference type="EC" id="3.6.4.13"/>
    </reaction>
</comment>
<comment type="catalytic activity">
    <reaction evidence="8">
        <text>RNA(n) + a ribonucleoside 5'-triphosphate = RNA(n+1) + diphosphate</text>
        <dbReference type="Rhea" id="RHEA:21248"/>
        <dbReference type="Rhea" id="RHEA-COMP:14527"/>
        <dbReference type="Rhea" id="RHEA-COMP:17342"/>
        <dbReference type="ChEBI" id="CHEBI:33019"/>
        <dbReference type="ChEBI" id="CHEBI:61557"/>
        <dbReference type="ChEBI" id="CHEBI:140395"/>
        <dbReference type="EC" id="2.7.7.48"/>
    </reaction>
</comment>
<comment type="catalytic activity">
    <reaction evidence="2">
        <text>RNA(n) + ATP = RNA(n)-3'-adenine ribonucleotide + diphosphate</text>
        <dbReference type="Rhea" id="RHEA:11332"/>
        <dbReference type="Rhea" id="RHEA-COMP:14527"/>
        <dbReference type="Rhea" id="RHEA-COMP:17347"/>
        <dbReference type="ChEBI" id="CHEBI:30616"/>
        <dbReference type="ChEBI" id="CHEBI:33019"/>
        <dbReference type="ChEBI" id="CHEBI:140395"/>
        <dbReference type="ChEBI" id="CHEBI:173115"/>
        <dbReference type="EC" id="2.7.7.19"/>
    </reaction>
</comment>
<comment type="catalytic activity">
    <reaction evidence="2">
        <text>4-O-(ADP-D-ribosyl)-L-aspartyl-[protein] + H2O = L-aspartyl-[protein] + ADP-D-ribose + H(+)</text>
        <dbReference type="Rhea" id="RHEA:54428"/>
        <dbReference type="Rhea" id="RHEA-COMP:9867"/>
        <dbReference type="Rhea" id="RHEA-COMP:13832"/>
        <dbReference type="ChEBI" id="CHEBI:15377"/>
        <dbReference type="ChEBI" id="CHEBI:15378"/>
        <dbReference type="ChEBI" id="CHEBI:29961"/>
        <dbReference type="ChEBI" id="CHEBI:57967"/>
        <dbReference type="ChEBI" id="CHEBI:138102"/>
    </reaction>
    <physiologicalReaction direction="left-to-right" evidence="2">
        <dbReference type="Rhea" id="RHEA:54429"/>
    </physiologicalReaction>
</comment>
<comment type="catalytic activity">
    <reaction evidence="2">
        <text>5-O-(ADP-D-ribosyl)-L-glutamyl-[protein] + H2O = L-glutamyl-[protein] + ADP-D-ribose + H(+)</text>
        <dbReference type="Rhea" id="RHEA:58248"/>
        <dbReference type="Rhea" id="RHEA-COMP:10208"/>
        <dbReference type="Rhea" id="RHEA-COMP:15089"/>
        <dbReference type="ChEBI" id="CHEBI:15377"/>
        <dbReference type="ChEBI" id="CHEBI:15378"/>
        <dbReference type="ChEBI" id="CHEBI:29973"/>
        <dbReference type="ChEBI" id="CHEBI:57967"/>
        <dbReference type="ChEBI" id="CHEBI:142540"/>
    </reaction>
    <physiologicalReaction direction="left-to-right" evidence="2">
        <dbReference type="Rhea" id="RHEA:58249"/>
    </physiologicalReaction>
</comment>
<comment type="catalytic activity">
    <reaction evidence="6">
        <text>ADP-alpha-D-ribose 1''-phosphate + H2O = ADP-D-ribose + phosphate</text>
        <dbReference type="Rhea" id="RHEA:25029"/>
        <dbReference type="ChEBI" id="CHEBI:15377"/>
        <dbReference type="ChEBI" id="CHEBI:43474"/>
        <dbReference type="ChEBI" id="CHEBI:57967"/>
        <dbReference type="ChEBI" id="CHEBI:58753"/>
        <dbReference type="EC" id="3.1.3.84"/>
    </reaction>
    <physiologicalReaction direction="left-to-right" evidence="6">
        <dbReference type="Rhea" id="RHEA:25030"/>
    </physiologicalReaction>
</comment>
<comment type="cofactor">
    <cofactor evidence="2">
        <name>Mg(2+)</name>
        <dbReference type="ChEBI" id="CHEBI:18420"/>
    </cofactor>
    <cofactor evidence="2">
        <name>Mn(2+)</name>
        <dbReference type="ChEBI" id="CHEBI:29035"/>
    </cofactor>
    <text evidence="2">For nsP4 adenylyltransferase activity; Mn(2+) supports catalysis at 60% of the levels observed with Mg(2+).</text>
</comment>
<comment type="cofactor">
    <cofactor evidence="2">
        <name>Mg(2+)</name>
        <dbReference type="ChEBI" id="CHEBI:18420"/>
    </cofactor>
    <text evidence="2">For nsP4 RNA-directed RNA polymerase activity.</text>
</comment>
<comment type="cofactor">
    <cofactor evidence="4">
        <name>Mg(2+)</name>
        <dbReference type="ChEBI" id="CHEBI:18420"/>
    </cofactor>
    <text evidence="4">For nsP1 guanylylation.</text>
</comment>
<comment type="cofactor">
    <cofactor>
        <name>Mg(2+)</name>
        <dbReference type="ChEBI" id="CHEBI:18420"/>
    </cofactor>
    <text evidence="6">For nsP2 RNA triphosphatase activity.</text>
</comment>
<comment type="cofactor">
    <cofactor>
        <name>Mg(2+)</name>
        <dbReference type="ChEBI" id="CHEBI:18420"/>
    </cofactor>
    <text evidence="6">For nsP2 NTPase activity.</text>
</comment>
<comment type="subunit">
    <molecule>mRNA-capping enzyme nsP1</molecule>
    <text evidence="2 4">Interacts with non-structural protein 3 (By similarity). Interacts with RNA-directed RNA polymerase nsP4 (By similarity). Interacts with protease nsP2 (By similarity). interacts with itself (By similarity).</text>
</comment>
<comment type="subunit">
    <molecule>Non-structural protein 3</molecule>
    <text evidence="2 4">Interacts with mRNA-capping enzyme nsP1 (By similarity). Interacts with host DDX1 (By similarity). Interacts with host DDX3 (By similarity). Interacts (via C-terminus) with host G3BP1; this interaction inhibits the formation of host stress granules on viral mRNAs and the nsp3-G3BP1 complexes bind viral RNAs and probably orchestrate the assembly of viral replication complexes (By similarity). Interacts (via C-terminus) with host G3BP2; this interaction inhibits the formation of host stress granules on viral mRNAs and the nsp3-G3BP2 complexes bind viral RNAs and probably orchestrate the assembly of viral replication complexes (By similarity).</text>
</comment>
<comment type="subunit">
    <molecule>RNA-directed RNA polymerase nsP4</molecule>
    <text evidence="2 4">Interacts with mRNA-capping enzyme nsP1 (By similarity). Interacts with protease nsP2 (By similarity). interacts with itself (By similarity).</text>
</comment>
<comment type="subunit">
    <molecule>Protease nsP2</molecule>
    <text evidence="2 4">Interacts with RNA-directed RNA polymerase nsP4 (By similarity). Interacts with mRNA-capping enzyme nsP1 (By similarity). Interacts with KPNA1/karyopherin-alpha1; this interaction probably allows the active transport of protease nsP2 into the host nucleus (By similarity).</text>
</comment>
<comment type="subcellular location">
    <molecule>Polyprotein P1234</molecule>
    <subcellularLocation>
        <location evidence="12">Host cytoplasmic vesicle membrane</location>
        <topology evidence="12">Peripheral membrane protein</topology>
    </subcellularLocation>
    <text evidence="12">Part of cytoplasmic vesicles, which are probably formed at the plasma membrane and internalized leading to late endosomal/lysosomal spherules containing the replication complex.</text>
</comment>
<comment type="subcellular location">
    <molecule>Polyprotein P123'</molecule>
    <subcellularLocation>
        <location evidence="12">Host cytoplasmic vesicle membrane</location>
        <topology evidence="12">Peripheral membrane protein</topology>
    </subcellularLocation>
    <text evidence="12">Part of cytoplasmic vesicles, which are probably formed at the plasma membrane and internalized leading to late endosomal/lysosomal spherules containing the replication complex.</text>
</comment>
<comment type="subcellular location">
    <molecule>Polyprotein P123</molecule>
    <subcellularLocation>
        <location evidence="12">Host cytoplasmic vesicle membrane</location>
        <topology evidence="12">Peripheral membrane protein</topology>
    </subcellularLocation>
    <text evidence="12">Part of cytoplasmic vesicles, which are probably formed at the plasma membrane and internalized leading to late endosomal/lysosomal spherules containing the replication complex.</text>
</comment>
<comment type="subcellular location">
    <molecule>mRNA-capping enzyme nsP1</molecule>
    <subcellularLocation>
        <location evidence="3">Host cytoplasmic vesicle membrane</location>
        <topology evidence="3">Lipid-anchor</topology>
    </subcellularLocation>
    <subcellularLocation>
        <location evidence="3">Host cell membrane</location>
        <topology evidence="3">Lipid-anchor</topology>
        <orientation evidence="3">Cytoplasmic side</orientation>
    </subcellularLocation>
    <subcellularLocation>
        <location evidence="3">Host cell projection</location>
        <location evidence="3">Host filopodium</location>
    </subcellularLocation>
    <text evidence="3">In the late phase of infection, the polyprotein is quickly cleaved before localization to cellular membranes. Then a fraction of nsP1 localizes to the inner surface of the plasma membrane and its filopodial extensions. Only the palmitoylated nsP1 localizes to the host filopodia (By similarity). NsP1 is also part of cytoplasmic vesicles, which are probably formed at the plasma membrane and internalized leading to late endosomal/lysosomal spherules containing the replication complex (By similarity).</text>
</comment>
<comment type="subcellular location">
    <molecule>Protease nsP2</molecule>
    <subcellularLocation>
        <location evidence="3">Host cytoplasmic vesicle membrane</location>
        <topology evidence="3">Peripheral membrane protein</topology>
    </subcellularLocation>
    <subcellularLocation>
        <location evidence="4">Host nucleus</location>
    </subcellularLocation>
    <subcellularLocation>
        <location evidence="4">Host cytoplasm</location>
    </subcellularLocation>
    <text evidence="3 4">In the late phase of infection, the polyprotein is quickly cleaved before localization to cellular membranes. Then approximately half of nsP2 is found in the nucleus (By similarity). Shuttles between cytoplasm and nucleus (By similarity). NsP2 is also part of cytoplasmic vesicles, which are probably formed at the plasma membrane and internalized leading to late endosomal/lysosomal spherules containing the replication complex (By similarity).</text>
</comment>
<comment type="subcellular location">
    <molecule>Non-structural protein 3</molecule>
    <subcellularLocation>
        <location evidence="2">Host cytoplasmic vesicle membrane</location>
        <topology evidence="12">Peripheral membrane protein</topology>
    </subcellularLocation>
    <text evidence="2">In the late phase of infection, the polyprotein is quickly cleaved before localization to cellular membranes. Then nsP3 and nsP3' form aggregates in cytoplasm (By similarity). NsP3 is also part of cytoplasmic vesicles, which are probably formed at the plasma membrane and internalized leading to late endosomal/lysosomal spherules containing the replication complex (By similarity).</text>
</comment>
<comment type="subcellular location">
    <molecule>Non-structural protein 3'</molecule>
    <subcellularLocation>
        <location evidence="2">Host cytoplasmic vesicle membrane</location>
        <topology evidence="12">Peripheral membrane protein</topology>
    </subcellularLocation>
    <text evidence="2">In the late phase of infection, the polyprotein is quickly cleaved before localization to cellular membranes. Then nsP3 and nsP3' form aggregates in cytoplasm (By similarity). NsP3' is also part of cytoplasmic vesicles, which are probably formed at the plasma membrane and internalized leading to late endosomal/lysosomal spherules containing the replication complex (By similarity).</text>
</comment>
<comment type="subcellular location">
    <molecule>RNA-directed RNA polymerase nsP4</molecule>
    <subcellularLocation>
        <location>Host cytoplasmic vesicle membrane</location>
        <topology evidence="2">Peripheral membrane protein</topology>
    </subcellularLocation>
    <text evidence="3">NsP4 is part of cytoplasmic vesicles, which are probably formed at the plasma membrane and internalized leading to late endosomal/lysosomal spherules containing the replication complex.</text>
</comment>
<comment type="domain">
    <molecule>Protease nsP2</molecule>
    <text evidence="4 6">The N-terminus exhibits NTPase and RNA triphosphatase activities and is proposed to have helicase activity, whereas the C-terminus possesses protease activity (By similarity). Contains a nuclear localization signal and a nuclear export signal, these two motifs are probably involved in the shuttling between the cytoplasm and the nucleus of nsP2 (By similarity). The C-terminus is required for promoting the export of host STAT1 (By similarity).</text>
</comment>
<comment type="domain">
    <molecule>Non-structural protein 3</molecule>
    <text evidence="2 3">In the N-terminus, the macro domain displays a mono-ADP-ribosylhydrolase activity (By similarity). The central part has a zinc-binding function (By similarity). The C-terminus contains two FGDF motifs necessary and sufficient for formation of the nsP3/G3BP1 complex (By similarity).</text>
</comment>
<comment type="domain">
    <molecule>Non-structural protein 3'</molecule>
    <text evidence="2 3">In the N-terminus, the macro domain displays a mono-ADP-ribosylhydrolase activity (By similarity). The central part has a zinc-binding function (By similarity). The C-terminus contains two FGDF motifs necessary and sufficient for formation of the nsP3/G3BP1 complex (By similarity).</text>
</comment>
<comment type="PTM">
    <molecule>Polyprotein P1234</molecule>
    <text evidence="2">Specific enzymatic cleavages in vivo yield mature proteins (By similarity). The processing of the polyprotein is temporally regulated (By similarity). In early stages (1.7 hpi), P1234 is first cleaved in trans through its nsP2 protease activity, releasing P123' and nsP4, which associate to form the early replication complex (By similarity). At the same time, P1234 is also cut at the nsP1/nsP2 site early in infection but with lower efficiency (By similarity). After replication of the viral minus-strand RNAs (4 hpi), the polyproteins are cut at the nsP1/nsP2 and nsP2/nsP3 sites very efficiently, preventing accumulation of P123' and P1234 and allowing the formation of the late replication complex (By similarity). NsP3'/nsP4 site is not cleaved anymore and P34 is produced rather than nsP4 (By similarity).</text>
</comment>
<comment type="PTM">
    <molecule>Polyprotein P123</molecule>
    <text evidence="2">Specific enzymatic cleavages in vivo yield mature proteins (By similarity). The processing of the polyprotein is temporally regulated (By similarity). In early stages (1.7 hpi), P123 is cleaved at the nsP1/nsP2 site with low efficiency (By similarity). After replication of the viral minus-strand RNAs (4 hpi), the polyproteins are cut at the nsP1/nsP2 and nsP2/nsP3 sites very efficiently, preventing accumulation of P123 and allowing the formation of the late replication complex (By similarity).</text>
</comment>
<comment type="PTM">
    <molecule>Polyprotein P123'</molecule>
    <text evidence="2">Specific enzymatic cleavages in vivo yield mature proteins (By similarity). The processing of the polyprotein is temporally regulated (By similarity). In early stages (1.7 hpi), P123' is cleaved at the nsP1/nsP2 site with low efficiency (By similarity). After replication of the viral minus-strand RNAs (4 hpi), the polyproteins are cut at the nsP1/nsP2 and nsP2/nsP3 sites very efficiently, preventing accumulation of P123' and allowing the formation of the late replication complex (By similarity).</text>
</comment>
<comment type="PTM">
    <molecule>mRNA-capping enzyme nsP1</molecule>
    <text evidence="6">Palmitoylated by host palmitoyltransferases ZDHHC2 and ZDHHC19.</text>
</comment>
<comment type="PTM">
    <molecule>Non-structural protein 3</molecule>
    <text evidence="3">Phosphorylated by host on serines and threonines.</text>
</comment>
<comment type="PTM">
    <molecule>Non-structural protein 3'</molecule>
    <text evidence="3">Phosphorylated by host on serines and threonines.</text>
</comment>
<comment type="PTM">
    <molecule>RNA-directed RNA polymerase nsP4</molecule>
    <text evidence="2">Ubiquitinated; targets the protein for rapid degradation via the ubiquitin system (By similarity). Nsp4 is present in extremely low quantities due to low frequency of translation through the amber stop-codon and the degradation by the ubiquitin pathway (By similarity).</text>
</comment>
<comment type="miscellaneous">
    <text evidence="2">Viral replication produces dsRNA in the late phase of infection, resulting in a strong activation of host EIF2AK2/PKR, leading to almost complete phosphorylation of EIF2A (By similarity). This inactivates completely cellular translation initiation, resulting shutoff of host proteins synthesis (By similarity). However, phosphorylation of EIF2A is probably not the only mechanism responsible for the host translation shutoff (By similarity). The viral translation can still occur normally because it relies on a hairpin structure in the coding region of sgRNA and is EIF2A-, EIF2D-, EIF4G- EIF4A-independent (By similarity).</text>
</comment>
<comment type="miscellaneous">
    <text evidence="1 2 12">The genome codes for P123, but readthrough of a terminator codon UGA occurs between the codons for Tyr-1882 and Leu-1884 giving rise to P1234 (Probable). P1234 is cleaved quickly by nsP2 into P123' and nsP4 (By similarity). Further processing of p123' gives nsP1, nsP2 and nsP3' which is 6 amino acids longer than nsP3 since the cleavage site is after the readthrough (By similarity). This unusual molecular mechanism ensures that few nsP4 are produced compared to other non-structural proteins (By similarity). Mutant viruses with no alternative termination site grow significantly slower than wild-type virus (By similarity). The opal termination codon is frequently mutated to a sense codon on passage in cell culture (By similarity). The presence of the opal codon may be a requirement for viral maintenance in both vertebrate and invertebrate hosts and a selective advantage may be conferred in cell culture for the sense codon (By similarity).</text>
</comment>
<evidence type="ECO:0000250" key="1">
    <source>
        <dbReference type="UniProtKB" id="O90368"/>
    </source>
</evidence>
<evidence type="ECO:0000250" key="2">
    <source>
        <dbReference type="UniProtKB" id="P03317"/>
    </source>
</evidence>
<evidence type="ECO:0000250" key="3">
    <source>
        <dbReference type="UniProtKB" id="P08411"/>
    </source>
</evidence>
<evidence type="ECO:0000250" key="4">
    <source>
        <dbReference type="UniProtKB" id="P27282"/>
    </source>
</evidence>
<evidence type="ECO:0000250" key="5">
    <source>
        <dbReference type="UniProtKB" id="P36328"/>
    </source>
</evidence>
<evidence type="ECO:0000250" key="6">
    <source>
        <dbReference type="UniProtKB" id="Q8JUX6"/>
    </source>
</evidence>
<evidence type="ECO:0000255" key="7">
    <source>
        <dbReference type="PROSITE-ProRule" id="PRU00490"/>
    </source>
</evidence>
<evidence type="ECO:0000255" key="8">
    <source>
        <dbReference type="PROSITE-ProRule" id="PRU00539"/>
    </source>
</evidence>
<evidence type="ECO:0000255" key="9">
    <source>
        <dbReference type="PROSITE-ProRule" id="PRU00853"/>
    </source>
</evidence>
<evidence type="ECO:0000255" key="10">
    <source>
        <dbReference type="PROSITE-ProRule" id="PRU00990"/>
    </source>
</evidence>
<evidence type="ECO:0000255" key="11">
    <source>
        <dbReference type="PROSITE-ProRule" id="PRU01079"/>
    </source>
</evidence>
<evidence type="ECO:0000305" key="12"/>
<organismHost>
    <name type="scientific">Aedes</name>
    <dbReference type="NCBI Taxonomy" id="7158"/>
</organismHost>